<proteinExistence type="evidence at protein level"/>
<sequence length="131" mass="13507">MKIFLPVLLAALLGVERASSLMCFSCLNQKSNLYCLKPTICSDQDNYCVTVSASAGIGNLVTFGHSLSKTCSPACPIPEGVNVGVASMGISCCQSFLCNFSAADGGLRASVTLLGAGLLLSLLPALLRFGP</sequence>
<keyword id="KW-1003">Cell membrane</keyword>
<keyword id="KW-1015">Disulfide bond</keyword>
<keyword id="KW-0325">Glycoprotein</keyword>
<keyword id="KW-0336">GPI-anchor</keyword>
<keyword id="KW-0945">Host-virus interaction</keyword>
<keyword id="KW-0449">Lipoprotein</keyword>
<keyword id="KW-0472">Membrane</keyword>
<keyword id="KW-1267">Proteomics identification</keyword>
<keyword id="KW-1185">Reference proteome</keyword>
<keyword id="KW-0732">Signal</keyword>
<organism>
    <name type="scientific">Homo sapiens</name>
    <name type="common">Human</name>
    <dbReference type="NCBI Taxonomy" id="9606"/>
    <lineage>
        <taxon>Eukaryota</taxon>
        <taxon>Metazoa</taxon>
        <taxon>Chordata</taxon>
        <taxon>Craniata</taxon>
        <taxon>Vertebrata</taxon>
        <taxon>Euteleostomi</taxon>
        <taxon>Mammalia</taxon>
        <taxon>Eutheria</taxon>
        <taxon>Euarchontoglires</taxon>
        <taxon>Primates</taxon>
        <taxon>Haplorrhini</taxon>
        <taxon>Catarrhini</taxon>
        <taxon>Hominidae</taxon>
        <taxon>Homo</taxon>
    </lineage>
</organism>
<accession>Q16553</accession>
<accession>B2R4X5</accession>
<accession>D3DWJ2</accession>
<accession>Q0VDE5</accession>
<reference key="1">
    <citation type="journal article" date="1996" name="Proc. Natl. Acad. Sci. U.S.A.">
        <title>RIG-E, a human homolog of the murine Ly-6 family, is induced by retinoic acid during the differentiation of acute promyelocytic leukemia cell.</title>
        <authorList>
            <person name="Mao M."/>
            <person name="Yu M."/>
            <person name="Tong J.-H."/>
            <person name="Ye J."/>
            <person name="Zhu J."/>
            <person name="Huang Q.-H."/>
            <person name="Fu G."/>
            <person name="Yu L."/>
            <person name="Zhao S.-Y."/>
            <person name="Waxman S."/>
            <person name="Lanotte M."/>
            <person name="Wang Z.-Y."/>
            <person name="Tan J.-Z."/>
            <person name="Chan S.-J."/>
            <person name="Chen Z."/>
        </authorList>
    </citation>
    <scope>NUCLEOTIDE SEQUENCE [MRNA]</scope>
    <source>
        <tissue>Promyelocytic leukemia</tissue>
    </source>
</reference>
<reference key="2">
    <citation type="journal article" date="1996" name="J. Immunol.">
        <title>Identification through bioinformatics of cDNAs encoding human thymic shared Ag-1/stem cell Ag-2: a new member of the human Ly-6 family.</title>
        <authorList>
            <person name="Capone M.C."/>
            <person name="Gorman D.M."/>
            <person name="Ching E.P."/>
            <person name="Zlotnik A."/>
        </authorList>
    </citation>
    <scope>NUCLEOTIDE SEQUENCE [MRNA]</scope>
    <source>
        <tissue>Brain</tissue>
        <tissue>Mammary gland</tissue>
    </source>
</reference>
<reference key="3">
    <citation type="journal article" date="1998" name="J. Immunol.">
        <title>Characterization and mapping to human chromosome 8q24.3 of Ly-6-related gene 9804 encoding an apparent homologue of mouse TSA-1.</title>
        <authorList>
            <person name="Shan X."/>
            <person name="Bourdeau A."/>
            <person name="Rhoton A."/>
            <person name="Wells D.E."/>
            <person name="Cohen E.H."/>
            <person name="Landgraf B.E."/>
            <person name="Palfree R.G.E."/>
        </authorList>
    </citation>
    <scope>NUCLEOTIDE SEQUENCE [GENOMIC DNA]</scope>
    <source>
        <tissue>Monocyte</tissue>
    </source>
</reference>
<reference key="4">
    <citation type="journal article" date="2004" name="Nat. Genet.">
        <title>Complete sequencing and characterization of 21,243 full-length human cDNAs.</title>
        <authorList>
            <person name="Ota T."/>
            <person name="Suzuki Y."/>
            <person name="Nishikawa T."/>
            <person name="Otsuki T."/>
            <person name="Sugiyama T."/>
            <person name="Irie R."/>
            <person name="Wakamatsu A."/>
            <person name="Hayashi K."/>
            <person name="Sato H."/>
            <person name="Nagai K."/>
            <person name="Kimura K."/>
            <person name="Makita H."/>
            <person name="Sekine M."/>
            <person name="Obayashi M."/>
            <person name="Nishi T."/>
            <person name="Shibahara T."/>
            <person name="Tanaka T."/>
            <person name="Ishii S."/>
            <person name="Yamamoto J."/>
            <person name="Saito K."/>
            <person name="Kawai Y."/>
            <person name="Isono Y."/>
            <person name="Nakamura Y."/>
            <person name="Nagahari K."/>
            <person name="Murakami K."/>
            <person name="Yasuda T."/>
            <person name="Iwayanagi T."/>
            <person name="Wagatsuma M."/>
            <person name="Shiratori A."/>
            <person name="Sudo H."/>
            <person name="Hosoiri T."/>
            <person name="Kaku Y."/>
            <person name="Kodaira H."/>
            <person name="Kondo H."/>
            <person name="Sugawara M."/>
            <person name="Takahashi M."/>
            <person name="Kanda K."/>
            <person name="Yokoi T."/>
            <person name="Furuya T."/>
            <person name="Kikkawa E."/>
            <person name="Omura Y."/>
            <person name="Abe K."/>
            <person name="Kamihara K."/>
            <person name="Katsuta N."/>
            <person name="Sato K."/>
            <person name="Tanikawa M."/>
            <person name="Yamazaki M."/>
            <person name="Ninomiya K."/>
            <person name="Ishibashi T."/>
            <person name="Yamashita H."/>
            <person name="Murakawa K."/>
            <person name="Fujimori K."/>
            <person name="Tanai H."/>
            <person name="Kimata M."/>
            <person name="Watanabe M."/>
            <person name="Hiraoka S."/>
            <person name="Chiba Y."/>
            <person name="Ishida S."/>
            <person name="Ono Y."/>
            <person name="Takiguchi S."/>
            <person name="Watanabe S."/>
            <person name="Yosida M."/>
            <person name="Hotuta T."/>
            <person name="Kusano J."/>
            <person name="Kanehori K."/>
            <person name="Takahashi-Fujii A."/>
            <person name="Hara H."/>
            <person name="Tanase T.-O."/>
            <person name="Nomura Y."/>
            <person name="Togiya S."/>
            <person name="Komai F."/>
            <person name="Hara R."/>
            <person name="Takeuchi K."/>
            <person name="Arita M."/>
            <person name="Imose N."/>
            <person name="Musashino K."/>
            <person name="Yuuki H."/>
            <person name="Oshima A."/>
            <person name="Sasaki N."/>
            <person name="Aotsuka S."/>
            <person name="Yoshikawa Y."/>
            <person name="Matsunawa H."/>
            <person name="Ichihara T."/>
            <person name="Shiohata N."/>
            <person name="Sano S."/>
            <person name="Moriya S."/>
            <person name="Momiyama H."/>
            <person name="Satoh N."/>
            <person name="Takami S."/>
            <person name="Terashima Y."/>
            <person name="Suzuki O."/>
            <person name="Nakagawa S."/>
            <person name="Senoh A."/>
            <person name="Mizoguchi H."/>
            <person name="Goto Y."/>
            <person name="Shimizu F."/>
            <person name="Wakebe H."/>
            <person name="Hishigaki H."/>
            <person name="Watanabe T."/>
            <person name="Sugiyama A."/>
            <person name="Takemoto M."/>
            <person name="Kawakami B."/>
            <person name="Yamazaki M."/>
            <person name="Watanabe K."/>
            <person name="Kumagai A."/>
            <person name="Itakura S."/>
            <person name="Fukuzumi Y."/>
            <person name="Fujimori Y."/>
            <person name="Komiyama M."/>
            <person name="Tashiro H."/>
            <person name="Tanigami A."/>
            <person name="Fujiwara T."/>
            <person name="Ono T."/>
            <person name="Yamada K."/>
            <person name="Fujii Y."/>
            <person name="Ozaki K."/>
            <person name="Hirao M."/>
            <person name="Ohmori Y."/>
            <person name="Kawabata A."/>
            <person name="Hikiji T."/>
            <person name="Kobatake N."/>
            <person name="Inagaki H."/>
            <person name="Ikema Y."/>
            <person name="Okamoto S."/>
            <person name="Okitani R."/>
            <person name="Kawakami T."/>
            <person name="Noguchi S."/>
            <person name="Itoh T."/>
            <person name="Shigeta K."/>
            <person name="Senba T."/>
            <person name="Matsumura K."/>
            <person name="Nakajima Y."/>
            <person name="Mizuno T."/>
            <person name="Morinaga M."/>
            <person name="Sasaki M."/>
            <person name="Togashi T."/>
            <person name="Oyama M."/>
            <person name="Hata H."/>
            <person name="Watanabe M."/>
            <person name="Komatsu T."/>
            <person name="Mizushima-Sugano J."/>
            <person name="Satoh T."/>
            <person name="Shirai Y."/>
            <person name="Takahashi Y."/>
            <person name="Nakagawa K."/>
            <person name="Okumura K."/>
            <person name="Nagase T."/>
            <person name="Nomura N."/>
            <person name="Kikuchi H."/>
            <person name="Masuho Y."/>
            <person name="Yamashita R."/>
            <person name="Nakai K."/>
            <person name="Yada T."/>
            <person name="Nakamura Y."/>
            <person name="Ohara O."/>
            <person name="Isogai T."/>
            <person name="Sugano S."/>
        </authorList>
    </citation>
    <scope>NUCLEOTIDE SEQUENCE [LARGE SCALE MRNA]</scope>
    <source>
        <tissue>Mammary gland</tissue>
    </source>
</reference>
<reference key="5">
    <citation type="submission" date="2005-09" db="EMBL/GenBank/DDBJ databases">
        <authorList>
            <person name="Mural R.J."/>
            <person name="Istrail S."/>
            <person name="Sutton G.G."/>
            <person name="Florea L."/>
            <person name="Halpern A.L."/>
            <person name="Mobarry C.M."/>
            <person name="Lippert R."/>
            <person name="Walenz B."/>
            <person name="Shatkay H."/>
            <person name="Dew I."/>
            <person name="Miller J.R."/>
            <person name="Flanigan M.J."/>
            <person name="Edwards N.J."/>
            <person name="Bolanos R."/>
            <person name="Fasulo D."/>
            <person name="Halldorsson B.V."/>
            <person name="Hannenhalli S."/>
            <person name="Turner R."/>
            <person name="Yooseph S."/>
            <person name="Lu F."/>
            <person name="Nusskern D.R."/>
            <person name="Shue B.C."/>
            <person name="Zheng X.H."/>
            <person name="Zhong F."/>
            <person name="Delcher A.L."/>
            <person name="Huson D.H."/>
            <person name="Kravitz S.A."/>
            <person name="Mouchard L."/>
            <person name="Reinert K."/>
            <person name="Remington K.A."/>
            <person name="Clark A.G."/>
            <person name="Waterman M.S."/>
            <person name="Eichler E.E."/>
            <person name="Adams M.D."/>
            <person name="Hunkapiller M.W."/>
            <person name="Myers E.W."/>
            <person name="Venter J.C."/>
        </authorList>
    </citation>
    <scope>NUCLEOTIDE SEQUENCE [LARGE SCALE GENOMIC DNA]</scope>
</reference>
<reference key="6">
    <citation type="journal article" date="2004" name="Genome Res.">
        <title>The status, quality, and expansion of the NIH full-length cDNA project: the Mammalian Gene Collection (MGC).</title>
        <authorList>
            <consortium name="The MGC Project Team"/>
        </authorList>
    </citation>
    <scope>NUCLEOTIDE SEQUENCE [LARGE SCALE MRNA]</scope>
</reference>
<reference key="7">
    <citation type="journal article" date="2017" name="J. Biol. Chem.">
        <title>Interferon-inducible LY6E Protein Promotes HIV-1 Infection.</title>
        <authorList>
            <person name="Yu J."/>
            <person name="Liang C."/>
            <person name="Liu S.L."/>
        </authorList>
    </citation>
    <scope>FUNCTION (MICROBIAL INFECTION)</scope>
</reference>
<reference key="8">
    <citation type="journal article" date="2018" name="Proc. Natl. Acad. Sci. U.S.A.">
        <title>Flavivirus internalization is regulated by a size-dependent endocytic pathway.</title>
        <authorList>
            <person name="Hackett B.A."/>
            <person name="Cherry S."/>
        </authorList>
    </citation>
    <scope>FUNCTION (MICROBIAL INFECTION)</scope>
</reference>
<reference key="9">
    <citation type="journal article" date="2018" name="Nat. Commun.">
        <title>LY6E mediates an evolutionarily conserved enhancement of virus infection by targeting a late entry step.</title>
        <authorList>
            <person name="Mar K.B."/>
            <person name="Rinkenberger N.R."/>
            <person name="Boys I.N."/>
            <person name="Eitson J.L."/>
            <person name="McDougal M.B."/>
            <person name="Richardson R.B."/>
            <person name="Schoggins J.W."/>
        </authorList>
    </citation>
    <scope>FUNCTION (MICROBIAL INFECTION)</scope>
    <scope>MUTAGENESIS OF LEU-36 AND ILE-57</scope>
</reference>
<reference key="10">
    <citation type="journal article" date="2020" name="J. Virol.">
        <title>LY6E Restricts Entry of Human Coronaviruses, Including Currently Pandemic SARS-CoV-2.</title>
        <authorList>
            <person name="Zhao X."/>
            <person name="Zheng S."/>
            <person name="Chen D."/>
            <person name="Zheng M."/>
            <person name="Li X."/>
            <person name="Li G."/>
            <person name="Lin H."/>
            <person name="Chang J."/>
            <person name="Zeng H."/>
            <person name="Guo J.T."/>
        </authorList>
    </citation>
    <scope>FUNCTION</scope>
    <scope>MUTAGENESIS OF LEU-36 AND ASN-99</scope>
</reference>
<reference key="11">
    <citation type="journal article" date="2020" name="Nat. Microbiol.">
        <title>LY6E impairs coronavirus fusion and confers immune control of viral disease.</title>
        <authorList>
            <person name="Pfaender S."/>
            <person name="Mar K.B."/>
            <person name="Michailidis E."/>
            <person name="Kratzel A."/>
            <person name="Boys I.N."/>
            <person name="V'kovski P."/>
            <person name="Fan W."/>
            <person name="Kelly J.N."/>
            <person name="Hirt D."/>
            <person name="Ebert N."/>
            <person name="Stalder H."/>
            <person name="Kleine-Weber H."/>
            <person name="Hoffmann M."/>
            <person name="Hoffmann H.H."/>
            <person name="Saeed M."/>
            <person name="Dijkman R."/>
            <person name="Steinmann E."/>
            <person name="Wight-Carter M."/>
            <person name="McDougal M.B."/>
            <person name="Hanners N.W."/>
            <person name="Poehlmann S."/>
            <person name="Gallagher T."/>
            <person name="Todt D."/>
            <person name="Zimmer G."/>
            <person name="Rice C.M."/>
            <person name="Schoggins J.W."/>
            <person name="Thiel V."/>
        </authorList>
    </citation>
    <scope>FUNCTION</scope>
</reference>
<feature type="signal peptide" evidence="4">
    <location>
        <begin position="1"/>
        <end position="20"/>
    </location>
</feature>
<feature type="chain" id="PRO_0000036138" description="Lymphocyte antigen 6E">
    <location>
        <begin position="21"/>
        <end position="101"/>
    </location>
</feature>
<feature type="propeptide" id="PRO_0000036139" description="Removed in mature form" evidence="4">
    <location>
        <begin position="102"/>
        <end position="131"/>
    </location>
</feature>
<feature type="domain" description="UPAR/Ly6">
    <location>
        <begin position="21"/>
        <end position="101"/>
    </location>
</feature>
<feature type="lipid moiety-binding region" description="GPI-anchor amidated serine" evidence="4">
    <location>
        <position position="101"/>
    </location>
</feature>
<feature type="glycosylation site" description="N-linked (GlcNAc...) asparagine" evidence="4">
    <location>
        <position position="99"/>
    </location>
</feature>
<feature type="disulfide bond" evidence="1 2">
    <location>
        <begin position="23"/>
        <end position="48"/>
    </location>
</feature>
<feature type="disulfide bond" evidence="1 2">
    <location>
        <begin position="26"/>
        <end position="35"/>
    </location>
</feature>
<feature type="disulfide bond" evidence="1 2">
    <location>
        <begin position="41"/>
        <end position="71"/>
    </location>
</feature>
<feature type="disulfide bond" evidence="1 2">
    <location>
        <begin position="75"/>
        <end position="92"/>
    </location>
</feature>
<feature type="disulfide bond" evidence="1 2">
    <location>
        <begin position="93"/>
        <end position="98"/>
    </location>
</feature>
<feature type="mutagenesis site" description="Complete loss of viral entry enhancement. Abolishes inhibition of human coronaviruses entry." evidence="7 8">
    <original>L</original>
    <variation>A</variation>
    <location>
        <position position="36"/>
    </location>
</feature>
<feature type="mutagenesis site" description="About 50% loss of viral entry enhancement." evidence="7">
    <original>I</original>
    <variation>A</variation>
    <location>
        <position position="57"/>
    </location>
</feature>
<feature type="mutagenesis site" description="Abolishes inhibition of human coronaviruses entry." evidence="8">
    <original>N</original>
    <variation>A</variation>
    <location>
        <position position="99"/>
    </location>
</feature>
<protein>
    <recommendedName>
        <fullName evidence="9">Lymphocyte antigen 6E</fullName>
        <shortName>Ly-6E</shortName>
    </recommendedName>
    <alternativeName>
        <fullName>Retinoic acid-induced gene E protein</fullName>
        <shortName>RIG-E</shortName>
    </alternativeName>
    <alternativeName>
        <fullName>Stem cell antigen 2</fullName>
        <shortName>SCA-2</shortName>
    </alternativeName>
    <alternativeName>
        <fullName>Thymic shared antigen 1</fullName>
        <shortName>TSA-1</shortName>
    </alternativeName>
</protein>
<comment type="function">
    <text evidence="3 8">GPI-anchored cell surface protein that regulates T-lymphocytes proliferation, differentiation, and activation. Regulates the T-cell receptor (TCR) signaling by interacting with component CD3Z/CD247 at the plasma membrane, leading to CD3Z/CD247 phosphorylation modulation (By similarity). Restricts the entry of human coronaviruses, including SARS-CoV, MERS-CoV and SARS-CoV-2, by interfering with spike protein-mediated membrane fusion (PubMed:32641482). Also plays an essential role in placenta formation by acting as the main receptor for syncytin-A (SynA). Therefore, participates in the normal fusion of syncytiotrophoblast layer I (SynT-I) and in the proper morphogenesis of both fetal and maternal vasculatures within the placenta. May also act as a modulator of nicotinic acetylcholine receptors (nAChRs) activity (By similarity).</text>
</comment>
<comment type="function">
    <text evidence="5 6 7">(Microbial infection) Promotes entry, likely through an enhanced virus-cell fusion process, of various viruses including HIV-1, West Nile virus, dengue virus and Zika virus (PubMed:28130445). In contrast, the paramyxovirus PIV5, which enters at the plasma membrane, does not require LY6E (PubMed:28130445, PubMed:29610346). Mechanistically, adopts a microtubule-like organization upon viral infection and enhances viral uncoating after endosomal escape (PubMed:28130445, PubMed:30190477).</text>
</comment>
<comment type="subunit">
    <text evidence="3">Interacts with CHRNA4.</text>
</comment>
<comment type="interaction">
    <interactant intactId="EBI-18234679">
        <id>Q16553</id>
    </interactant>
    <interactant intactId="EBI-2858252">
        <id>Q6ZSS7</id>
        <label>MFSD6</label>
    </interactant>
    <organismsDiffer>false</organismsDiffer>
    <experiments>3</experiments>
</comment>
<comment type="interaction">
    <interactant intactId="EBI-18234679">
        <id>Q16553</id>
    </interactant>
    <interactant intactId="EBI-2844246">
        <id>Q9NV12</id>
        <label>TMEM140</label>
    </interactant>
    <organismsDiffer>false</organismsDiffer>
    <experiments>3</experiments>
</comment>
<comment type="interaction">
    <interactant intactId="EBI-18234679">
        <id>Q16553</id>
    </interactant>
    <interactant intactId="EBI-741829">
        <id>Q96HH6</id>
        <label>TMEM19</label>
    </interactant>
    <organismsDiffer>false</organismsDiffer>
    <experiments>3</experiments>
</comment>
<comment type="interaction">
    <interactant intactId="EBI-18234679">
        <id>Q16553</id>
    </interactant>
    <interactant intactId="EBI-11988865">
        <id>A5PKU2</id>
        <label>TUSC5</label>
    </interactant>
    <organismsDiffer>false</organismsDiffer>
    <experiments>3</experiments>
</comment>
<comment type="interaction">
    <interactant intactId="EBI-18234679">
        <id>Q16553</id>
    </interactant>
    <interactant intactId="EBI-25475868">
        <id>PRO_0000449624</id>
        <label>rep</label>
        <dbReference type="UniProtKB" id="P0DTD1"/>
    </interactant>
    <organismsDiffer>true</organismsDiffer>
    <experiments>3</experiments>
</comment>
<comment type="subcellular location">
    <subcellularLocation>
        <location evidence="3">Cell membrane</location>
        <topology evidence="3">Lipid-anchor</topology>
        <topology evidence="3">GPI-anchor</topology>
    </subcellularLocation>
</comment>
<comment type="tissue specificity">
    <text>Widely expressed, predominantly in liver, kidney, ovary, spleen and peripheral blood Leukocytes.</text>
</comment>
<comment type="induction">
    <text>By retinoic acid; in promyelocytic leukemia NB4 and in myeloblast HL-60 cell lines. Activated by IFN-alpha in monocytic cell line U-937 and in peripheral blood monocyte cells.</text>
</comment>
<name>LY6E_HUMAN</name>
<gene>
    <name evidence="10" type="primary">LY6E</name>
    <name type="synonym">9804</name>
    <name type="synonym">RIGE</name>
    <name type="synonym">SCA2</name>
    <name type="synonym">TSA1</name>
</gene>
<dbReference type="EMBL" id="Z68179">
    <property type="protein sequence ID" value="CAA92321.1"/>
    <property type="molecule type" value="mRNA"/>
</dbReference>
<dbReference type="EMBL" id="U42376">
    <property type="protein sequence ID" value="AAC50519.1"/>
    <property type="molecule type" value="mRNA"/>
</dbReference>
<dbReference type="EMBL" id="U56145">
    <property type="protein sequence ID" value="AAC50616.1"/>
    <property type="molecule type" value="mRNA"/>
</dbReference>
<dbReference type="EMBL" id="U66711">
    <property type="protein sequence ID" value="AAB07513.1"/>
    <property type="molecule type" value="Genomic_DNA"/>
</dbReference>
<dbReference type="EMBL" id="AK311983">
    <property type="protein sequence ID" value="BAG34922.1"/>
    <property type="molecule type" value="mRNA"/>
</dbReference>
<dbReference type="EMBL" id="CH471162">
    <property type="protein sequence ID" value="EAW82287.1"/>
    <property type="molecule type" value="Genomic_DNA"/>
</dbReference>
<dbReference type="EMBL" id="CH471162">
    <property type="protein sequence ID" value="EAW82288.1"/>
    <property type="molecule type" value="Genomic_DNA"/>
</dbReference>
<dbReference type="EMBL" id="CH471162">
    <property type="protein sequence ID" value="EAW82290.1"/>
    <property type="molecule type" value="Genomic_DNA"/>
</dbReference>
<dbReference type="EMBL" id="BC119708">
    <property type="protein sequence ID" value="AAI19709.1"/>
    <property type="molecule type" value="mRNA"/>
</dbReference>
<dbReference type="EMBL" id="BC119709">
    <property type="protein sequence ID" value="AAI19710.1"/>
    <property type="molecule type" value="mRNA"/>
</dbReference>
<dbReference type="CCDS" id="CCDS6394.1"/>
<dbReference type="RefSeq" id="NP_001120685.1">
    <property type="nucleotide sequence ID" value="NM_001127213.2"/>
</dbReference>
<dbReference type="RefSeq" id="NP_002337.1">
    <property type="nucleotide sequence ID" value="NM_002346.3"/>
</dbReference>
<dbReference type="BioGRID" id="110239">
    <property type="interactions" value="14"/>
</dbReference>
<dbReference type="FunCoup" id="Q16553">
    <property type="interactions" value="149"/>
</dbReference>
<dbReference type="IntAct" id="Q16553">
    <property type="interactions" value="5"/>
</dbReference>
<dbReference type="STRING" id="9606.ENSP00000428572"/>
<dbReference type="ChEMBL" id="CHEMBL4523584"/>
<dbReference type="GlyCosmos" id="Q16553">
    <property type="glycosylation" value="1 site, No reported glycans"/>
</dbReference>
<dbReference type="GlyGen" id="Q16553">
    <property type="glycosylation" value="1 site"/>
</dbReference>
<dbReference type="iPTMnet" id="Q16553"/>
<dbReference type="PhosphoSitePlus" id="Q16553"/>
<dbReference type="BioMuta" id="LY6E"/>
<dbReference type="DMDM" id="10720072"/>
<dbReference type="jPOST" id="Q16553"/>
<dbReference type="MassIVE" id="Q16553"/>
<dbReference type="PaxDb" id="9606-ENSP00000428572"/>
<dbReference type="PeptideAtlas" id="Q16553"/>
<dbReference type="ProteomicsDB" id="60911"/>
<dbReference type="ABCD" id="Q16553">
    <property type="antibodies" value="3 sequenced antibodies"/>
</dbReference>
<dbReference type="Antibodypedia" id="14558">
    <property type="antibodies" value="227 antibodies from 28 providers"/>
</dbReference>
<dbReference type="CPTC" id="Q16553">
    <property type="antibodies" value="3 antibodies"/>
</dbReference>
<dbReference type="DNASU" id="4061"/>
<dbReference type="Ensembl" id="ENST00000292494.11">
    <property type="protein sequence ID" value="ENSP00000292494.6"/>
    <property type="gene ID" value="ENSG00000160932.11"/>
</dbReference>
<dbReference type="Ensembl" id="ENST00000429120.6">
    <property type="protein sequence ID" value="ENSP00000414307.2"/>
    <property type="gene ID" value="ENSG00000160932.11"/>
</dbReference>
<dbReference type="Ensembl" id="ENST00000517503.1">
    <property type="protein sequence ID" value="ENSP00000428427.3"/>
    <property type="gene ID" value="ENSG00000160932.11"/>
</dbReference>
<dbReference type="Ensembl" id="ENST00000520466.5">
    <property type="protein sequence ID" value="ENSP00000428572.1"/>
    <property type="gene ID" value="ENSG00000160932.11"/>
</dbReference>
<dbReference type="Ensembl" id="ENST00000521003.5">
    <property type="protein sequence ID" value="ENSP00000428169.1"/>
    <property type="gene ID" value="ENSG00000160932.11"/>
</dbReference>
<dbReference type="Ensembl" id="ENST00000521699.5">
    <property type="protein sequence ID" value="ENSP00000427915.1"/>
    <property type="gene ID" value="ENSG00000160932.11"/>
</dbReference>
<dbReference type="Ensembl" id="ENST00000522024.1">
    <property type="protein sequence ID" value="ENSP00000428442.1"/>
    <property type="gene ID" value="ENSG00000160932.11"/>
</dbReference>
<dbReference type="Ensembl" id="ENST00000522971.5">
    <property type="protein sequence ID" value="ENSP00000428159.1"/>
    <property type="gene ID" value="ENSG00000160932.11"/>
</dbReference>
<dbReference type="Ensembl" id="ENST00000619718.2">
    <property type="protein sequence ID" value="ENSP00000482517.1"/>
    <property type="gene ID" value="ENSG00000278032.2"/>
</dbReference>
<dbReference type="Ensembl" id="ENST00000631568.1">
    <property type="protein sequence ID" value="ENSP00000488891.1"/>
    <property type="gene ID" value="ENSG00000278032.2"/>
</dbReference>
<dbReference type="Ensembl" id="ENST00000632424.1">
    <property type="protein sequence ID" value="ENSP00000488421.1"/>
    <property type="gene ID" value="ENSG00000278032.2"/>
</dbReference>
<dbReference type="Ensembl" id="ENST00000632516.1">
    <property type="protein sequence ID" value="ENSP00000487664.1"/>
    <property type="gene ID" value="ENSG00000278032.2"/>
</dbReference>
<dbReference type="Ensembl" id="ENST00000632519.1">
    <property type="protein sequence ID" value="ENSP00000488443.1"/>
    <property type="gene ID" value="ENSG00000278032.2"/>
</dbReference>
<dbReference type="Ensembl" id="ENST00000632812.1">
    <property type="protein sequence ID" value="ENSP00000488556.1"/>
    <property type="gene ID" value="ENSG00000278032.2"/>
</dbReference>
<dbReference type="Ensembl" id="ENST00000633451.1">
    <property type="protein sequence ID" value="ENSP00000488559.1"/>
    <property type="gene ID" value="ENSG00000278032.2"/>
</dbReference>
<dbReference type="GeneID" id="4061"/>
<dbReference type="KEGG" id="hsa:4061"/>
<dbReference type="MANE-Select" id="ENST00000292494.11">
    <property type="protein sequence ID" value="ENSP00000292494.6"/>
    <property type="RefSeq nucleotide sequence ID" value="NM_002346.3"/>
    <property type="RefSeq protein sequence ID" value="NP_002337.1"/>
</dbReference>
<dbReference type="UCSC" id="uc003yxm.3">
    <property type="organism name" value="human"/>
</dbReference>
<dbReference type="AGR" id="HGNC:6727"/>
<dbReference type="CTD" id="4061"/>
<dbReference type="DisGeNET" id="4061"/>
<dbReference type="GeneCards" id="LY6E"/>
<dbReference type="HGNC" id="HGNC:6727">
    <property type="gene designation" value="LY6E"/>
</dbReference>
<dbReference type="HPA" id="ENSG00000160932">
    <property type="expression patterns" value="Tissue enhanced (liver)"/>
</dbReference>
<dbReference type="MIM" id="601384">
    <property type="type" value="gene"/>
</dbReference>
<dbReference type="neXtProt" id="NX_Q16553"/>
<dbReference type="OpenTargets" id="ENSG00000160932"/>
<dbReference type="PharmGKB" id="PA30491"/>
<dbReference type="VEuPathDB" id="HostDB:ENSG00000160932"/>
<dbReference type="eggNOG" id="ENOG502SRPS">
    <property type="taxonomic scope" value="Eukaryota"/>
</dbReference>
<dbReference type="GeneTree" id="ENSGT00940000153378"/>
<dbReference type="HOGENOM" id="CLU_141358_0_0_1"/>
<dbReference type="InParanoid" id="Q16553"/>
<dbReference type="OMA" id="MDTSCCQ"/>
<dbReference type="OrthoDB" id="10592669at2759"/>
<dbReference type="PAN-GO" id="Q16553">
    <property type="GO annotations" value="3 GO annotations based on evolutionary models"/>
</dbReference>
<dbReference type="PhylomeDB" id="Q16553"/>
<dbReference type="TreeFam" id="TF336080"/>
<dbReference type="PathwayCommons" id="Q16553"/>
<dbReference type="Reactome" id="R-HSA-163125">
    <property type="pathway name" value="Post-translational modification: synthesis of GPI-anchored proteins"/>
</dbReference>
<dbReference type="SignaLink" id="Q16553"/>
<dbReference type="BioGRID-ORCS" id="4061">
    <property type="hits" value="22 hits in 1164 CRISPR screens"/>
</dbReference>
<dbReference type="ChiTaRS" id="LY6E">
    <property type="organism name" value="human"/>
</dbReference>
<dbReference type="GeneWiki" id="LY6E"/>
<dbReference type="GenomeRNAi" id="4061"/>
<dbReference type="Pharos" id="Q16553">
    <property type="development level" value="Tbio"/>
</dbReference>
<dbReference type="PRO" id="PR:Q16553"/>
<dbReference type="Proteomes" id="UP000005640">
    <property type="component" value="Chromosome 8"/>
</dbReference>
<dbReference type="RNAct" id="Q16553">
    <property type="molecule type" value="protein"/>
</dbReference>
<dbReference type="Bgee" id="ENSG00000160932">
    <property type="expression patterns" value="Expressed in right lobe of liver and 99 other cell types or tissues"/>
</dbReference>
<dbReference type="ExpressionAtlas" id="Q16553">
    <property type="expression patterns" value="baseline and differential"/>
</dbReference>
<dbReference type="GO" id="GO:0005576">
    <property type="term" value="C:extracellular region"/>
    <property type="evidence" value="ECO:0000304"/>
    <property type="project" value="Reactome"/>
</dbReference>
<dbReference type="GO" id="GO:0005886">
    <property type="term" value="C:plasma membrane"/>
    <property type="evidence" value="ECO:0000318"/>
    <property type="project" value="GO_Central"/>
</dbReference>
<dbReference type="GO" id="GO:0098552">
    <property type="term" value="C:side of membrane"/>
    <property type="evidence" value="ECO:0007669"/>
    <property type="project" value="UniProtKB-KW"/>
</dbReference>
<dbReference type="GO" id="GO:0045202">
    <property type="term" value="C:synapse"/>
    <property type="evidence" value="ECO:0007669"/>
    <property type="project" value="GOC"/>
</dbReference>
<dbReference type="GO" id="GO:0033130">
    <property type="term" value="F:acetylcholine receptor binding"/>
    <property type="evidence" value="ECO:0000318"/>
    <property type="project" value="GO_Central"/>
</dbReference>
<dbReference type="GO" id="GO:0030550">
    <property type="term" value="F:acetylcholine receptor inhibitor activity"/>
    <property type="evidence" value="ECO:0000318"/>
    <property type="project" value="GO_Central"/>
</dbReference>
<dbReference type="GO" id="GO:0095500">
    <property type="term" value="P:acetylcholine receptor signaling pathway"/>
    <property type="evidence" value="ECO:0000318"/>
    <property type="project" value="GO_Central"/>
</dbReference>
<dbReference type="GO" id="GO:0007166">
    <property type="term" value="P:cell surface receptor signaling pathway"/>
    <property type="evidence" value="ECO:0000304"/>
    <property type="project" value="ProtInc"/>
</dbReference>
<dbReference type="GO" id="GO:0046597">
    <property type="term" value="P:host-mediated suppression of symbiont invasion"/>
    <property type="evidence" value="ECO:0000314"/>
    <property type="project" value="UniProtKB"/>
</dbReference>
<dbReference type="CDD" id="cd23543">
    <property type="entry name" value="TFP_LU_ECD_Ly6E"/>
    <property type="match status" value="1"/>
</dbReference>
<dbReference type="FunFam" id="2.10.60.10:FF:000003">
    <property type="entry name" value="lymphocyte antigen 6E isoform X1"/>
    <property type="match status" value="1"/>
</dbReference>
<dbReference type="Gene3D" id="2.10.60.10">
    <property type="entry name" value="CD59"/>
    <property type="match status" value="1"/>
</dbReference>
<dbReference type="InterPro" id="IPR051110">
    <property type="entry name" value="Ly-6/neurotoxin-like_GPI-ap"/>
</dbReference>
<dbReference type="InterPro" id="IPR016054">
    <property type="entry name" value="LY6_UPA_recep-like"/>
</dbReference>
<dbReference type="InterPro" id="IPR045860">
    <property type="entry name" value="Snake_toxin-like_sf"/>
</dbReference>
<dbReference type="InterPro" id="IPR035076">
    <property type="entry name" value="Toxin/TOLIP"/>
</dbReference>
<dbReference type="PANTHER" id="PTHR16983:SF13">
    <property type="entry name" value="LYMPHOCYTE ANTIGEN 6E"/>
    <property type="match status" value="1"/>
</dbReference>
<dbReference type="PANTHER" id="PTHR16983">
    <property type="entry name" value="UPAR/LY6 DOMAIN-CONTAINING PROTEIN"/>
    <property type="match status" value="1"/>
</dbReference>
<dbReference type="Pfam" id="PF00087">
    <property type="entry name" value="Toxin_TOLIP"/>
    <property type="match status" value="1"/>
</dbReference>
<dbReference type="SMART" id="SM00134">
    <property type="entry name" value="LU"/>
    <property type="match status" value="1"/>
</dbReference>
<dbReference type="SUPFAM" id="SSF57302">
    <property type="entry name" value="Snake toxin-like"/>
    <property type="match status" value="1"/>
</dbReference>
<evidence type="ECO:0000250" key="1">
    <source>
        <dbReference type="UniProtKB" id="P0DP57"/>
    </source>
</evidence>
<evidence type="ECO:0000250" key="2">
    <source>
        <dbReference type="UniProtKB" id="P0DP58"/>
    </source>
</evidence>
<evidence type="ECO:0000250" key="3">
    <source>
        <dbReference type="UniProtKB" id="Q64253"/>
    </source>
</evidence>
<evidence type="ECO:0000255" key="4"/>
<evidence type="ECO:0000269" key="5">
    <source>
    </source>
</evidence>
<evidence type="ECO:0000269" key="6">
    <source>
    </source>
</evidence>
<evidence type="ECO:0000269" key="7">
    <source>
    </source>
</evidence>
<evidence type="ECO:0000269" key="8">
    <source>
    </source>
</evidence>
<evidence type="ECO:0000305" key="9"/>
<evidence type="ECO:0000312" key="10">
    <source>
        <dbReference type="HGNC" id="HGNC:6727"/>
    </source>
</evidence>